<gene>
    <name evidence="1" type="primary">metG</name>
    <name type="ordered locus">Chy400_3732</name>
</gene>
<accession>B9LDY3</accession>
<proteinExistence type="inferred from homology"/>
<name>SYM_CHLSY</name>
<organism>
    <name type="scientific">Chloroflexus aurantiacus (strain ATCC 29364 / DSM 637 / Y-400-fl)</name>
    <dbReference type="NCBI Taxonomy" id="480224"/>
    <lineage>
        <taxon>Bacteria</taxon>
        <taxon>Bacillati</taxon>
        <taxon>Chloroflexota</taxon>
        <taxon>Chloroflexia</taxon>
        <taxon>Chloroflexales</taxon>
        <taxon>Chloroflexineae</taxon>
        <taxon>Chloroflexaceae</taxon>
        <taxon>Chloroflexus</taxon>
    </lineage>
</organism>
<sequence length="600" mass="67972">MPEHILVAVAWPYANGPRHIGHVAGFGVPADIFARYHRLRGNHVLMISGTDEHGTPITLVADKEGTTPQAIADRYNKIIGDDLYNLGLSYDIFTRTTTANHYAVTQDIFRTLYERGYIIRQETLGAFSATTGRTLPDRYIEGTCPICGYDEARGDQCDNCGSQLDPTDLINPRSKVDGQPPVFKPTEHFFLDLPAFAEQLHAWIDRQTHWRPNVRNFSLNFLKELKPRAITRDLEWGVPIPLPEYVHRDDKKIYVWFDAVIGYLSASIEWARNSGQPDAWRTWWQNPAARHFYFMGKDNIVFHTVIWPAMLLGYGAGGDFGTDPSGTYQGVPLQLPYNVVSSEFLTMEGKKFSSSRGIVIYVNDFLSRYDADALRYFLTIAGPENQDTDFTWAEFVRRNNDELVATWGNLVNRTLTNVYKNFGSVPQPGPLTATDEQLIQEVNGGLETVGDLLATARFKAALSEAMRLAAQVNIYLSEQEPWKVIKSDRERAATIWYVALRCVDTLKIIFTPFLPFSSQRLHEYLGYDGYIAGPLSFRDVTEADGRVHRVLTGNYAEWVGRWQPSALPVGQALRQPQPLFKKLDEKVVDEELARMQSRAS</sequence>
<protein>
    <recommendedName>
        <fullName evidence="1">Methionine--tRNA ligase</fullName>
        <ecNumber evidence="1">6.1.1.10</ecNumber>
    </recommendedName>
    <alternativeName>
        <fullName evidence="1">Methionyl-tRNA synthetase</fullName>
        <shortName evidence="1">MetRS</shortName>
    </alternativeName>
</protein>
<reference key="1">
    <citation type="submission" date="2009-01" db="EMBL/GenBank/DDBJ databases">
        <title>Complete sequence of Chloroflexus sp. Y-400-fl.</title>
        <authorList>
            <consortium name="US DOE Joint Genome Institute"/>
            <person name="Lucas S."/>
            <person name="Copeland A."/>
            <person name="Lapidus A."/>
            <person name="Glavina del Rio T."/>
            <person name="Dalin E."/>
            <person name="Tice H."/>
            <person name="Bruce D."/>
            <person name="Goodwin L."/>
            <person name="Pitluck S."/>
            <person name="Sims D."/>
            <person name="Kiss H."/>
            <person name="Brettin T."/>
            <person name="Detter J.C."/>
            <person name="Han C."/>
            <person name="Larimer F."/>
            <person name="Land M."/>
            <person name="Hauser L."/>
            <person name="Kyrpides N."/>
            <person name="Ovchinnikova G."/>
            <person name="Bryant D.A."/>
            <person name="Richardson P."/>
        </authorList>
    </citation>
    <scope>NUCLEOTIDE SEQUENCE [LARGE SCALE GENOMIC DNA]</scope>
    <source>
        <strain>ATCC 29364 / DSM 637 / Y-400-fl</strain>
    </source>
</reference>
<feature type="chain" id="PRO_1000118729" description="Methionine--tRNA ligase">
    <location>
        <begin position="1"/>
        <end position="600"/>
    </location>
</feature>
<feature type="short sequence motif" description="'HIGH' region">
    <location>
        <begin position="12"/>
        <end position="22"/>
    </location>
</feature>
<feature type="short sequence motif" description="'KMSKS' region">
    <location>
        <begin position="351"/>
        <end position="355"/>
    </location>
</feature>
<feature type="binding site" evidence="1">
    <location>
        <position position="144"/>
    </location>
    <ligand>
        <name>Zn(2+)</name>
        <dbReference type="ChEBI" id="CHEBI:29105"/>
    </ligand>
</feature>
<feature type="binding site" evidence="1">
    <location>
        <position position="147"/>
    </location>
    <ligand>
        <name>Zn(2+)</name>
        <dbReference type="ChEBI" id="CHEBI:29105"/>
    </ligand>
</feature>
<feature type="binding site" evidence="1">
    <location>
        <position position="157"/>
    </location>
    <ligand>
        <name>Zn(2+)</name>
        <dbReference type="ChEBI" id="CHEBI:29105"/>
    </ligand>
</feature>
<feature type="binding site" evidence="1">
    <location>
        <position position="160"/>
    </location>
    <ligand>
        <name>Zn(2+)</name>
        <dbReference type="ChEBI" id="CHEBI:29105"/>
    </ligand>
</feature>
<feature type="binding site" evidence="1">
    <location>
        <position position="354"/>
    </location>
    <ligand>
        <name>ATP</name>
        <dbReference type="ChEBI" id="CHEBI:30616"/>
    </ligand>
</feature>
<keyword id="KW-0030">Aminoacyl-tRNA synthetase</keyword>
<keyword id="KW-0067">ATP-binding</keyword>
<keyword id="KW-0963">Cytoplasm</keyword>
<keyword id="KW-0436">Ligase</keyword>
<keyword id="KW-0479">Metal-binding</keyword>
<keyword id="KW-0547">Nucleotide-binding</keyword>
<keyword id="KW-0648">Protein biosynthesis</keyword>
<keyword id="KW-0862">Zinc</keyword>
<comment type="function">
    <text evidence="1">Is required not only for elongation of protein synthesis but also for the initiation of all mRNA translation through initiator tRNA(fMet) aminoacylation.</text>
</comment>
<comment type="catalytic activity">
    <reaction evidence="1">
        <text>tRNA(Met) + L-methionine + ATP = L-methionyl-tRNA(Met) + AMP + diphosphate</text>
        <dbReference type="Rhea" id="RHEA:13481"/>
        <dbReference type="Rhea" id="RHEA-COMP:9667"/>
        <dbReference type="Rhea" id="RHEA-COMP:9698"/>
        <dbReference type="ChEBI" id="CHEBI:30616"/>
        <dbReference type="ChEBI" id="CHEBI:33019"/>
        <dbReference type="ChEBI" id="CHEBI:57844"/>
        <dbReference type="ChEBI" id="CHEBI:78442"/>
        <dbReference type="ChEBI" id="CHEBI:78530"/>
        <dbReference type="ChEBI" id="CHEBI:456215"/>
        <dbReference type="EC" id="6.1.1.10"/>
    </reaction>
</comment>
<comment type="cofactor">
    <cofactor evidence="1">
        <name>Zn(2+)</name>
        <dbReference type="ChEBI" id="CHEBI:29105"/>
    </cofactor>
    <text evidence="1">Binds 1 zinc ion per subunit.</text>
</comment>
<comment type="subunit">
    <text evidence="1">Monomer.</text>
</comment>
<comment type="subcellular location">
    <subcellularLocation>
        <location evidence="1">Cytoplasm</location>
    </subcellularLocation>
</comment>
<comment type="similarity">
    <text evidence="1">Belongs to the class-I aminoacyl-tRNA synthetase family. MetG type 1 subfamily.</text>
</comment>
<dbReference type="EC" id="6.1.1.10" evidence="1"/>
<dbReference type="EMBL" id="CP001364">
    <property type="protein sequence ID" value="ACM55099.1"/>
    <property type="molecule type" value="Genomic_DNA"/>
</dbReference>
<dbReference type="SMR" id="B9LDY3"/>
<dbReference type="KEGG" id="chl:Chy400_3732"/>
<dbReference type="HOGENOM" id="CLU_009710_1_2_0"/>
<dbReference type="OrthoDB" id="9810191at2"/>
<dbReference type="GO" id="GO:0005829">
    <property type="term" value="C:cytosol"/>
    <property type="evidence" value="ECO:0007669"/>
    <property type="project" value="TreeGrafter"/>
</dbReference>
<dbReference type="GO" id="GO:0005524">
    <property type="term" value="F:ATP binding"/>
    <property type="evidence" value="ECO:0007669"/>
    <property type="project" value="UniProtKB-UniRule"/>
</dbReference>
<dbReference type="GO" id="GO:0046872">
    <property type="term" value="F:metal ion binding"/>
    <property type="evidence" value="ECO:0007669"/>
    <property type="project" value="UniProtKB-KW"/>
</dbReference>
<dbReference type="GO" id="GO:0004825">
    <property type="term" value="F:methionine-tRNA ligase activity"/>
    <property type="evidence" value="ECO:0007669"/>
    <property type="project" value="UniProtKB-UniRule"/>
</dbReference>
<dbReference type="GO" id="GO:0006431">
    <property type="term" value="P:methionyl-tRNA aminoacylation"/>
    <property type="evidence" value="ECO:0007669"/>
    <property type="project" value="UniProtKB-UniRule"/>
</dbReference>
<dbReference type="CDD" id="cd07957">
    <property type="entry name" value="Anticodon_Ia_Met"/>
    <property type="match status" value="1"/>
</dbReference>
<dbReference type="CDD" id="cd00814">
    <property type="entry name" value="MetRS_core"/>
    <property type="match status" value="1"/>
</dbReference>
<dbReference type="FunFam" id="2.20.28.20:FF:000001">
    <property type="entry name" value="Methionine--tRNA ligase"/>
    <property type="match status" value="1"/>
</dbReference>
<dbReference type="Gene3D" id="3.40.50.620">
    <property type="entry name" value="HUPs"/>
    <property type="match status" value="1"/>
</dbReference>
<dbReference type="Gene3D" id="1.10.730.10">
    <property type="entry name" value="Isoleucyl-tRNA Synthetase, Domain 1"/>
    <property type="match status" value="1"/>
</dbReference>
<dbReference type="Gene3D" id="2.20.28.20">
    <property type="entry name" value="Methionyl-tRNA synthetase, Zn-domain"/>
    <property type="match status" value="1"/>
</dbReference>
<dbReference type="HAMAP" id="MF_00098">
    <property type="entry name" value="Met_tRNA_synth_type1"/>
    <property type="match status" value="1"/>
</dbReference>
<dbReference type="InterPro" id="IPR041872">
    <property type="entry name" value="Anticodon_Met"/>
</dbReference>
<dbReference type="InterPro" id="IPR023458">
    <property type="entry name" value="Met-tRNA_ligase_1"/>
</dbReference>
<dbReference type="InterPro" id="IPR014758">
    <property type="entry name" value="Met-tRNA_synth"/>
</dbReference>
<dbReference type="InterPro" id="IPR015413">
    <property type="entry name" value="Methionyl/Leucyl_tRNA_Synth"/>
</dbReference>
<dbReference type="InterPro" id="IPR033911">
    <property type="entry name" value="MetRS_core"/>
</dbReference>
<dbReference type="InterPro" id="IPR029038">
    <property type="entry name" value="MetRS_Zn"/>
</dbReference>
<dbReference type="InterPro" id="IPR014729">
    <property type="entry name" value="Rossmann-like_a/b/a_fold"/>
</dbReference>
<dbReference type="InterPro" id="IPR009080">
    <property type="entry name" value="tRNAsynth_Ia_anticodon-bd"/>
</dbReference>
<dbReference type="NCBIfam" id="TIGR00398">
    <property type="entry name" value="metG"/>
    <property type="match status" value="1"/>
</dbReference>
<dbReference type="PANTHER" id="PTHR45765">
    <property type="entry name" value="METHIONINE--TRNA LIGASE"/>
    <property type="match status" value="1"/>
</dbReference>
<dbReference type="PANTHER" id="PTHR45765:SF1">
    <property type="entry name" value="METHIONINE--TRNA LIGASE, CYTOPLASMIC"/>
    <property type="match status" value="1"/>
</dbReference>
<dbReference type="Pfam" id="PF19303">
    <property type="entry name" value="Anticodon_3"/>
    <property type="match status" value="1"/>
</dbReference>
<dbReference type="Pfam" id="PF09334">
    <property type="entry name" value="tRNA-synt_1g"/>
    <property type="match status" value="1"/>
</dbReference>
<dbReference type="PRINTS" id="PR01041">
    <property type="entry name" value="TRNASYNTHMET"/>
</dbReference>
<dbReference type="SUPFAM" id="SSF47323">
    <property type="entry name" value="Anticodon-binding domain of a subclass of class I aminoacyl-tRNA synthetases"/>
    <property type="match status" value="1"/>
</dbReference>
<dbReference type="SUPFAM" id="SSF57770">
    <property type="entry name" value="Methionyl-tRNA synthetase (MetRS), Zn-domain"/>
    <property type="match status" value="1"/>
</dbReference>
<dbReference type="SUPFAM" id="SSF52374">
    <property type="entry name" value="Nucleotidylyl transferase"/>
    <property type="match status" value="1"/>
</dbReference>
<evidence type="ECO:0000255" key="1">
    <source>
        <dbReference type="HAMAP-Rule" id="MF_00098"/>
    </source>
</evidence>